<comment type="function">
    <text evidence="1">Together with the chaperonin GroEL, plays an essential role in assisting protein folding. The GroEL-GroES system forms a nano-cage that allows encapsulation of the non-native substrate proteins and provides a physical environment optimized to promote and accelerate protein folding. GroES binds to the apical surface of the GroEL ring, thereby capping the opening of the GroEL channel.</text>
</comment>
<comment type="subunit">
    <text evidence="1">Heptamer of 7 subunits arranged in a ring. Interacts with the chaperonin GroEL.</text>
</comment>
<comment type="subcellular location">
    <subcellularLocation>
        <location evidence="1">Cytoplasm</location>
    </subcellularLocation>
</comment>
<comment type="similarity">
    <text evidence="1">Belongs to the GroES chaperonin family.</text>
</comment>
<evidence type="ECO:0000255" key="1">
    <source>
        <dbReference type="HAMAP-Rule" id="MF_00580"/>
    </source>
</evidence>
<keyword id="KW-0143">Chaperone</keyword>
<keyword id="KW-0963">Cytoplasm</keyword>
<keyword id="KW-1185">Reference proteome</keyword>
<dbReference type="EMBL" id="FM180568">
    <property type="protein sequence ID" value="CAS12016.1"/>
    <property type="molecule type" value="Genomic_DNA"/>
</dbReference>
<dbReference type="RefSeq" id="WP_001026276.1">
    <property type="nucleotide sequence ID" value="NC_011601.1"/>
</dbReference>
<dbReference type="SMR" id="B7UPW2"/>
<dbReference type="KEGG" id="ecg:E2348C_4468"/>
<dbReference type="HOGENOM" id="CLU_132825_1_1_6"/>
<dbReference type="Proteomes" id="UP000008205">
    <property type="component" value="Chromosome"/>
</dbReference>
<dbReference type="GO" id="GO:0005737">
    <property type="term" value="C:cytoplasm"/>
    <property type="evidence" value="ECO:0007669"/>
    <property type="project" value="UniProtKB-SubCell"/>
</dbReference>
<dbReference type="GO" id="GO:0005524">
    <property type="term" value="F:ATP binding"/>
    <property type="evidence" value="ECO:0007669"/>
    <property type="project" value="InterPro"/>
</dbReference>
<dbReference type="GO" id="GO:0046872">
    <property type="term" value="F:metal ion binding"/>
    <property type="evidence" value="ECO:0007669"/>
    <property type="project" value="TreeGrafter"/>
</dbReference>
<dbReference type="GO" id="GO:0044183">
    <property type="term" value="F:protein folding chaperone"/>
    <property type="evidence" value="ECO:0007669"/>
    <property type="project" value="InterPro"/>
</dbReference>
<dbReference type="GO" id="GO:0051087">
    <property type="term" value="F:protein-folding chaperone binding"/>
    <property type="evidence" value="ECO:0007669"/>
    <property type="project" value="TreeGrafter"/>
</dbReference>
<dbReference type="GO" id="GO:0051082">
    <property type="term" value="F:unfolded protein binding"/>
    <property type="evidence" value="ECO:0007669"/>
    <property type="project" value="TreeGrafter"/>
</dbReference>
<dbReference type="GO" id="GO:0051085">
    <property type="term" value="P:chaperone cofactor-dependent protein refolding"/>
    <property type="evidence" value="ECO:0007669"/>
    <property type="project" value="TreeGrafter"/>
</dbReference>
<dbReference type="CDD" id="cd00320">
    <property type="entry name" value="cpn10"/>
    <property type="match status" value="1"/>
</dbReference>
<dbReference type="FunFam" id="2.30.33.40:FF:000001">
    <property type="entry name" value="10 kDa chaperonin"/>
    <property type="match status" value="1"/>
</dbReference>
<dbReference type="Gene3D" id="2.30.33.40">
    <property type="entry name" value="GroES chaperonin"/>
    <property type="match status" value="1"/>
</dbReference>
<dbReference type="HAMAP" id="MF_00580">
    <property type="entry name" value="CH10"/>
    <property type="match status" value="1"/>
</dbReference>
<dbReference type="InterPro" id="IPR020818">
    <property type="entry name" value="Chaperonin_GroES"/>
</dbReference>
<dbReference type="InterPro" id="IPR037124">
    <property type="entry name" value="Chaperonin_GroES_sf"/>
</dbReference>
<dbReference type="InterPro" id="IPR018369">
    <property type="entry name" value="Chaprnonin_Cpn10_CS"/>
</dbReference>
<dbReference type="InterPro" id="IPR011032">
    <property type="entry name" value="GroES-like_sf"/>
</dbReference>
<dbReference type="NCBIfam" id="NF001526">
    <property type="entry name" value="PRK00364.1-1"/>
    <property type="match status" value="1"/>
</dbReference>
<dbReference type="NCBIfam" id="NF001527">
    <property type="entry name" value="PRK00364.1-2"/>
    <property type="match status" value="1"/>
</dbReference>
<dbReference type="NCBIfam" id="NF001531">
    <property type="entry name" value="PRK00364.2-2"/>
    <property type="match status" value="1"/>
</dbReference>
<dbReference type="PANTHER" id="PTHR10772">
    <property type="entry name" value="10 KDA HEAT SHOCK PROTEIN"/>
    <property type="match status" value="1"/>
</dbReference>
<dbReference type="PANTHER" id="PTHR10772:SF58">
    <property type="entry name" value="CO-CHAPERONIN GROES"/>
    <property type="match status" value="1"/>
</dbReference>
<dbReference type="Pfam" id="PF00166">
    <property type="entry name" value="Cpn10"/>
    <property type="match status" value="1"/>
</dbReference>
<dbReference type="PRINTS" id="PR00297">
    <property type="entry name" value="CHAPERONIN10"/>
</dbReference>
<dbReference type="SMART" id="SM00883">
    <property type="entry name" value="Cpn10"/>
    <property type="match status" value="1"/>
</dbReference>
<dbReference type="SUPFAM" id="SSF50129">
    <property type="entry name" value="GroES-like"/>
    <property type="match status" value="1"/>
</dbReference>
<dbReference type="PROSITE" id="PS00681">
    <property type="entry name" value="CHAPERONINS_CPN10"/>
    <property type="match status" value="1"/>
</dbReference>
<protein>
    <recommendedName>
        <fullName evidence="1">Co-chaperonin GroES</fullName>
    </recommendedName>
    <alternativeName>
        <fullName evidence="1">10 kDa chaperonin</fullName>
    </alternativeName>
    <alternativeName>
        <fullName evidence="1">Chaperonin-10</fullName>
        <shortName evidence="1">Cpn10</shortName>
    </alternativeName>
</protein>
<reference key="1">
    <citation type="journal article" date="2009" name="J. Bacteriol.">
        <title>Complete genome sequence and comparative genome analysis of enteropathogenic Escherichia coli O127:H6 strain E2348/69.</title>
        <authorList>
            <person name="Iguchi A."/>
            <person name="Thomson N.R."/>
            <person name="Ogura Y."/>
            <person name="Saunders D."/>
            <person name="Ooka T."/>
            <person name="Henderson I.R."/>
            <person name="Harris D."/>
            <person name="Asadulghani M."/>
            <person name="Kurokawa K."/>
            <person name="Dean P."/>
            <person name="Kenny B."/>
            <person name="Quail M.A."/>
            <person name="Thurston S."/>
            <person name="Dougan G."/>
            <person name="Hayashi T."/>
            <person name="Parkhill J."/>
            <person name="Frankel G."/>
        </authorList>
    </citation>
    <scope>NUCLEOTIDE SEQUENCE [LARGE SCALE GENOMIC DNA]</scope>
    <source>
        <strain>E2348/69 / EPEC</strain>
    </source>
</reference>
<feature type="chain" id="PRO_1000146903" description="Co-chaperonin GroES">
    <location>
        <begin position="1"/>
        <end position="97"/>
    </location>
</feature>
<accession>B7UPW2</accession>
<name>CH10_ECO27</name>
<proteinExistence type="inferred from homology"/>
<sequence>MNIRPLHDRVIVKRKEVETKSAGGIVLTGSAAAKSTRGEVLAVGNGRILENGEVKPLDVKVGDIVIFNDGYGVKSEKIDNEEVLIMSESDILAIVEA</sequence>
<organism>
    <name type="scientific">Escherichia coli O127:H6 (strain E2348/69 / EPEC)</name>
    <dbReference type="NCBI Taxonomy" id="574521"/>
    <lineage>
        <taxon>Bacteria</taxon>
        <taxon>Pseudomonadati</taxon>
        <taxon>Pseudomonadota</taxon>
        <taxon>Gammaproteobacteria</taxon>
        <taxon>Enterobacterales</taxon>
        <taxon>Enterobacteriaceae</taxon>
        <taxon>Escherichia</taxon>
    </lineage>
</organism>
<gene>
    <name evidence="1" type="primary">groES</name>
    <name evidence="1" type="synonym">groS</name>
    <name type="ordered locus">E2348C_4468</name>
</gene>